<reference key="1">
    <citation type="submission" date="2008-07" db="EMBL/GenBank/DDBJ databases">
        <title>Molecular evolution of the Toll-like receptor-related genes in primates.</title>
        <authorList>
            <person name="Nakajima T."/>
            <person name="Ohtani H."/>
            <person name="Satta Y."/>
            <person name="Uno Y."/>
            <person name="Akari H."/>
            <person name="Ishida T."/>
            <person name="Kimura A."/>
        </authorList>
    </citation>
    <scope>NUCLEOTIDE SEQUENCE [MRNA]</scope>
</reference>
<proteinExistence type="evidence at transcript level"/>
<feature type="signal peptide" evidence="5">
    <location>
        <begin position="1"/>
        <end position="20"/>
    </location>
</feature>
<feature type="chain" id="PRO_0000363774" description="Toll-like receptor 2">
    <location>
        <begin position="21"/>
        <end position="784"/>
    </location>
</feature>
<feature type="topological domain" description="Extracellular" evidence="5">
    <location>
        <begin position="21"/>
        <end position="587"/>
    </location>
</feature>
<feature type="transmembrane region" description="Helical" evidence="5">
    <location>
        <begin position="588"/>
        <end position="608"/>
    </location>
</feature>
<feature type="topological domain" description="Cytoplasmic" evidence="5">
    <location>
        <begin position="609"/>
        <end position="784"/>
    </location>
</feature>
<feature type="repeat" description="LRR 1">
    <location>
        <begin position="54"/>
        <end position="77"/>
    </location>
</feature>
<feature type="repeat" description="LRR 2">
    <location>
        <begin position="78"/>
        <end position="101"/>
    </location>
</feature>
<feature type="repeat" description="LRR 3">
    <location>
        <begin position="102"/>
        <end position="125"/>
    </location>
</feature>
<feature type="repeat" description="LRR 4">
    <location>
        <begin position="126"/>
        <end position="150"/>
    </location>
</feature>
<feature type="repeat" description="LRR 5">
    <location>
        <begin position="151"/>
        <end position="175"/>
    </location>
</feature>
<feature type="repeat" description="LRR 6">
    <location>
        <begin position="176"/>
        <end position="199"/>
    </location>
</feature>
<feature type="repeat" description="LRR 7">
    <location>
        <begin position="200"/>
        <end position="223"/>
    </location>
</feature>
<feature type="repeat" description="LRR 8">
    <location>
        <begin position="224"/>
        <end position="250"/>
    </location>
</feature>
<feature type="repeat" description="LRR 9">
    <location>
        <begin position="251"/>
        <end position="278"/>
    </location>
</feature>
<feature type="repeat" description="LRR 10">
    <location>
        <begin position="279"/>
        <end position="308"/>
    </location>
</feature>
<feature type="repeat" description="LRR 11">
    <location>
        <begin position="309"/>
        <end position="337"/>
    </location>
</feature>
<feature type="repeat" description="LRR 12">
    <location>
        <begin position="338"/>
        <end position="361"/>
    </location>
</feature>
<feature type="repeat" description="LRR 13">
    <location>
        <begin position="362"/>
        <end position="388"/>
    </location>
</feature>
<feature type="repeat" description="LRR 14">
    <location>
        <begin position="389"/>
        <end position="414"/>
    </location>
</feature>
<feature type="repeat" description="LRR 15">
    <location>
        <begin position="415"/>
        <end position="437"/>
    </location>
</feature>
<feature type="repeat" description="LRR 16">
    <location>
        <begin position="438"/>
        <end position="457"/>
    </location>
</feature>
<feature type="repeat" description="LRR 17">
    <location>
        <begin position="458"/>
        <end position="478"/>
    </location>
</feature>
<feature type="repeat" description="LRR 18">
    <location>
        <begin position="479"/>
        <end position="500"/>
    </location>
</feature>
<feature type="repeat" description="LRR 19">
    <location>
        <begin position="501"/>
        <end position="524"/>
    </location>
</feature>
<feature type="domain" description="LRRCT">
    <location>
        <begin position="525"/>
        <end position="579"/>
    </location>
</feature>
<feature type="domain" description="TIR" evidence="6">
    <location>
        <begin position="639"/>
        <end position="782"/>
    </location>
</feature>
<feature type="short sequence motif" description="ATG16L1-binding motif">
    <location>
        <begin position="761"/>
        <end position="778"/>
    </location>
</feature>
<feature type="site" description="Interaction with bacterial lipopeptide" evidence="1">
    <location>
        <position position="349"/>
    </location>
</feature>
<feature type="glycosylation site" description="N-linked (GlcNAc...) asparagine" evidence="5">
    <location>
        <position position="114"/>
    </location>
</feature>
<feature type="glycosylation site" description="N-linked (GlcNAc...) asparagine" evidence="5">
    <location>
        <position position="199"/>
    </location>
</feature>
<feature type="glycosylation site" description="N-linked (GlcNAc...) asparagine" evidence="5">
    <location>
        <position position="414"/>
    </location>
</feature>
<feature type="glycosylation site" description="N-linked (GlcNAc...) asparagine" evidence="5">
    <location>
        <position position="442"/>
    </location>
</feature>
<feature type="disulfide bond" evidence="1">
    <location>
        <begin position="30"/>
        <end position="36"/>
    </location>
</feature>
<feature type="disulfide bond" evidence="1">
    <location>
        <begin position="353"/>
        <end position="382"/>
    </location>
</feature>
<feature type="disulfide bond" evidence="1">
    <location>
        <begin position="432"/>
        <end position="454"/>
    </location>
</feature>
<feature type="cross-link" description="Glycyl lysine isopeptide (Lys-Gly) (interchain with G-Cter in ubiquitin)" evidence="3">
    <location>
        <position position="754"/>
    </location>
</feature>
<accession>B3Y615</accession>
<sequence length="784" mass="89824">MPHTLWMVWVLGVIISLSKEESSNQASLSCDRNGICKGSSGSLNSIPSGLTEAVKSLDLSNNRITYISNSDLQRCVNLQALVLTSNGINTIEEDSFSSLGSLEHLDLSYNYLSNLSSSWFKPLSSLTFLNLLGNPYKTLGETSLFSHLTKLQILRVGNMDTFTKIQRKDFAGLTFLEELEIDASDLQSYEPKSLKSIQNVSHLILHMKQHILLLEIFVDVTSSVECLELRDTDLDTFHFSELSTGETNSLIKKFTFRNVKITDESLFQVMKLLNQISGLLELEFDDCTLNGVGNFRASDNDRVIDPGKVETLTIRRLHIPRFYLFYDLSTLYSLTERVKRITVENSKVFLVPCLLSQHLKSLEYLDLSENLMVEEYLKNSACEDAWPSLQTLILRQNHLASLEKTGETLLTLKNLTNVDISKNSFHSMPETCQWPEKMKYLNLSSTRIHSVTGCIPKTLEILDVSNNNLNLFSLNLPQLKELYISRNKLMTLPDASLLPMLLVLKISRNAITTFSKEQLDSFHTLKTLEAGGNNFICSCEFLSFTQEQQALAKVLIDWPANYLCDSPSHVRGQQVQDVRLSVSECHRTALVSGMCCALFLLILLTGVLCHRFHGLWYMKMMWAWLQAKRKPRKAPSRNICYDAFVSYSERDAYWVENLMVQELENFNPPFKLCLHKRDFIPGKWIIDNIIDSIEKSHKTVFVLSENFVKSEWCKYELDFSHFRLFDENNDAAILILLEPIEKKAIPQRFCKLRKIMNTKTYLEWPMDEAQREGFWVNLRAAIKS</sequence>
<comment type="function">
    <text evidence="3 4">Cooperates with LY96 to mediate the innate immune response to bacterial lipoproteins and other microbial cell wall components. Cooperates with TLR1 or TLR6 to mediate the innate immune response to bacterial lipoproteins or lipopeptides. Acts via MYD88 and TRAF6, leading to NF-kappa-B activation, cytokine secretion and the inflammatory response (By similarity). May also promote apoptosis in response to lipoproteins. Forms activation clusters composed of several receptors depending on the ligand, these clusters trigger signaling from the cell surface and subsequently are targeted to the Golgi in a lipid-raft dependent pathway. Forms the cluster TLR2:TLR6:CD14:CD36 in response to diacylated lipopeptides and TLR2:TLR1:CD14 in response to triacylated lipopeptides (By similarity).</text>
</comment>
<comment type="subunit">
    <text evidence="3 4">Interacts with LY96, TLR1 and TLR6 (via extracellular domain). TLR2 seems to exist in heterodimers with either TLR1 or TLR6 before stimulation by the ligand. The heterodimers form bigger oligomers in response to their corresponding ligands as well as further heterotypic associations with other receptors such as CD14 and/or CD36. Binds MYD88 (via TIR domain). Interacts with TICAM1. Interacts with CNPY3. Interacts with ATG16L1. Interacts with PPP1R11. Interacts with TICAM2. Interacts with TIRAP (By similarity).</text>
</comment>
<comment type="subcellular location">
    <subcellularLocation>
        <location evidence="4">Membrane</location>
        <topology evidence="5">Single-pass type I membrane protein</topology>
    </subcellularLocation>
    <subcellularLocation>
        <location evidence="4">Cytoplasmic vesicle</location>
        <location evidence="4">Phagosome membrane</location>
        <topology evidence="5">Single-pass type I membrane protein</topology>
    </subcellularLocation>
    <subcellularLocation>
        <location evidence="3">Membrane raft</location>
    </subcellularLocation>
    <text evidence="3">Does not reside in lipid rafts before stimulation but accumulates increasingly in the raft upon the presence of the microbial ligand. In response to diacylated lipoproteins, TLR2:TLR6 heterodimers are recruited in lipid rafts, this recruitment determine the intracellular targeting to the Golgi apparatus. Triacylated lipoproteins induce the same mechanism for TLR2:TLR1 heterodimers.</text>
</comment>
<comment type="domain">
    <text evidence="1">Ester-bound lipid substrates are bound through a crevice formed between the LRR 11 and LRR 12.</text>
</comment>
<comment type="domain">
    <text evidence="1">The ATG16L1-binding motif mediates interaction with ATG16L1.</text>
</comment>
<comment type="PTM">
    <text evidence="4">Ubiquitinated at Lys-754 by PPP1R11, leading to its degradation. Deubiquitinated by USP2.</text>
</comment>
<comment type="PTM">
    <text evidence="3">Glycosylation of Asn-442 is critical for secretion of the N-terminal ectodomain of TLR2.</text>
</comment>
<comment type="similarity">
    <text evidence="7">Belongs to the Toll-like receptor family.</text>
</comment>
<comment type="caution">
    <text evidence="2 7">In some plant proteins and in human SARM1, the TIR domain has NAD(+) hydrolase (NADase) activity (By similarity). However, despite the presence of the catalytic Asp residue, the isolated TIR domain of human TLR4 lacks NADase activity (By similarity). Based on this, it is unlikely that Toll-like receptors have NADase activity.</text>
</comment>
<dbReference type="EMBL" id="AB445627">
    <property type="protein sequence ID" value="BAG55024.1"/>
    <property type="molecule type" value="mRNA"/>
</dbReference>
<dbReference type="RefSeq" id="NP_001266693.1">
    <property type="nucleotide sequence ID" value="NM_001279764.1"/>
</dbReference>
<dbReference type="RefSeq" id="XP_018880449.1">
    <property type="nucleotide sequence ID" value="XM_019024904.1"/>
</dbReference>
<dbReference type="RefSeq" id="XP_018880450.1">
    <property type="nucleotide sequence ID" value="XM_019024905.1"/>
</dbReference>
<dbReference type="RefSeq" id="XP_018880451.1">
    <property type="nucleotide sequence ID" value="XM_019024906.1"/>
</dbReference>
<dbReference type="RefSeq" id="XP_018880452.1">
    <property type="nucleotide sequence ID" value="XM_019024907.1"/>
</dbReference>
<dbReference type="RefSeq" id="XP_018880453.1">
    <property type="nucleotide sequence ID" value="XM_019024908.1"/>
</dbReference>
<dbReference type="RefSeq" id="XP_018880454.1">
    <property type="nucleotide sequence ID" value="XM_019024909.1"/>
</dbReference>
<dbReference type="RefSeq" id="XP_018880455.1">
    <property type="nucleotide sequence ID" value="XM_019024910.1"/>
</dbReference>
<dbReference type="RefSeq" id="XP_018880456.1">
    <property type="nucleotide sequence ID" value="XM_019024911.1"/>
</dbReference>
<dbReference type="RefSeq" id="XP_018880457.1">
    <property type="nucleotide sequence ID" value="XM_019024912.1"/>
</dbReference>
<dbReference type="SMR" id="B3Y615"/>
<dbReference type="FunCoup" id="B3Y615">
    <property type="interactions" value="538"/>
</dbReference>
<dbReference type="STRING" id="9593.ENSGGOP00000003012"/>
<dbReference type="GlyCosmos" id="B3Y615">
    <property type="glycosylation" value="4 sites, No reported glycans"/>
</dbReference>
<dbReference type="Ensembl" id="ENSGGOT00000003080.3">
    <property type="protein sequence ID" value="ENSGGOP00000003012.3"/>
    <property type="gene ID" value="ENSGGOG00000003066.3"/>
</dbReference>
<dbReference type="GeneID" id="101128447"/>
<dbReference type="KEGG" id="ggo:101128447"/>
<dbReference type="CTD" id="7097"/>
<dbReference type="eggNOG" id="KOG4641">
    <property type="taxonomic scope" value="Eukaryota"/>
</dbReference>
<dbReference type="GeneTree" id="ENSGT00940000156323"/>
<dbReference type="InParanoid" id="B3Y615"/>
<dbReference type="OMA" id="NRDICYD"/>
<dbReference type="Proteomes" id="UP000001519">
    <property type="component" value="Chromosome 4"/>
</dbReference>
<dbReference type="Bgee" id="ENSGGOG00000003066">
    <property type="expression patterns" value="Expressed in liver and 6 other cell types or tissues"/>
</dbReference>
<dbReference type="GO" id="GO:0009986">
    <property type="term" value="C:cell surface"/>
    <property type="evidence" value="ECO:0007669"/>
    <property type="project" value="Ensembl"/>
</dbReference>
<dbReference type="GO" id="GO:0005829">
    <property type="term" value="C:cytosol"/>
    <property type="evidence" value="ECO:0007669"/>
    <property type="project" value="Ensembl"/>
</dbReference>
<dbReference type="GO" id="GO:0005794">
    <property type="term" value="C:Golgi apparatus"/>
    <property type="evidence" value="ECO:0000250"/>
    <property type="project" value="UniProtKB"/>
</dbReference>
<dbReference type="GO" id="GO:0045121">
    <property type="term" value="C:membrane raft"/>
    <property type="evidence" value="ECO:0000250"/>
    <property type="project" value="UniProtKB"/>
</dbReference>
<dbReference type="GO" id="GO:0005654">
    <property type="term" value="C:nucleoplasm"/>
    <property type="evidence" value="ECO:0007669"/>
    <property type="project" value="Ensembl"/>
</dbReference>
<dbReference type="GO" id="GO:0030670">
    <property type="term" value="C:phagocytic vesicle membrane"/>
    <property type="evidence" value="ECO:0007669"/>
    <property type="project" value="UniProtKB-SubCell"/>
</dbReference>
<dbReference type="GO" id="GO:0005886">
    <property type="term" value="C:plasma membrane"/>
    <property type="evidence" value="ECO:0000318"/>
    <property type="project" value="GO_Central"/>
</dbReference>
<dbReference type="GO" id="GO:0043235">
    <property type="term" value="C:receptor complex"/>
    <property type="evidence" value="ECO:0000318"/>
    <property type="project" value="GO_Central"/>
</dbReference>
<dbReference type="GO" id="GO:0035354">
    <property type="term" value="C:Toll-like receptor 1-Toll-like receptor 2 protein complex"/>
    <property type="evidence" value="ECO:0007669"/>
    <property type="project" value="Ensembl"/>
</dbReference>
<dbReference type="GO" id="GO:0035355">
    <property type="term" value="C:Toll-like receptor 2-Toll-like receptor 6 protein complex"/>
    <property type="evidence" value="ECO:0007669"/>
    <property type="project" value="Ensembl"/>
</dbReference>
<dbReference type="GO" id="GO:0001540">
    <property type="term" value="F:amyloid-beta binding"/>
    <property type="evidence" value="ECO:0007669"/>
    <property type="project" value="Ensembl"/>
</dbReference>
<dbReference type="GO" id="GO:0042802">
    <property type="term" value="F:identical protein binding"/>
    <property type="evidence" value="ECO:0007669"/>
    <property type="project" value="Ensembl"/>
</dbReference>
<dbReference type="GO" id="GO:0001530">
    <property type="term" value="F:lipopolysaccharide binding"/>
    <property type="evidence" value="ECO:0007669"/>
    <property type="project" value="Ensembl"/>
</dbReference>
<dbReference type="GO" id="GO:0061809">
    <property type="term" value="F:NAD+ nucleosidase activity, cyclic ADP-ribose generating"/>
    <property type="evidence" value="ECO:0007669"/>
    <property type="project" value="UniProtKB-EC"/>
</dbReference>
<dbReference type="GO" id="GO:0038187">
    <property type="term" value="F:pattern recognition receptor activity"/>
    <property type="evidence" value="ECO:0007669"/>
    <property type="project" value="Ensembl"/>
</dbReference>
<dbReference type="GO" id="GO:0042834">
    <property type="term" value="F:peptidoglycan binding"/>
    <property type="evidence" value="ECO:0007669"/>
    <property type="project" value="Ensembl"/>
</dbReference>
<dbReference type="GO" id="GO:0044877">
    <property type="term" value="F:protein-containing complex binding"/>
    <property type="evidence" value="ECO:0007669"/>
    <property type="project" value="Ensembl"/>
</dbReference>
<dbReference type="GO" id="GO:0038023">
    <property type="term" value="F:signaling receptor activity"/>
    <property type="evidence" value="ECO:0000318"/>
    <property type="project" value="GO_Central"/>
</dbReference>
<dbReference type="GO" id="GO:0035325">
    <property type="term" value="F:Toll-like receptor binding"/>
    <property type="evidence" value="ECO:0007669"/>
    <property type="project" value="Ensembl"/>
</dbReference>
<dbReference type="GO" id="GO:0004888">
    <property type="term" value="F:transmembrane signaling receptor activity"/>
    <property type="evidence" value="ECO:0007669"/>
    <property type="project" value="InterPro"/>
</dbReference>
<dbReference type="GO" id="GO:0042497">
    <property type="term" value="F:triacyl lipopeptide binding"/>
    <property type="evidence" value="ECO:0000318"/>
    <property type="project" value="GO_Central"/>
</dbReference>
<dbReference type="GO" id="GO:0071726">
    <property type="term" value="P:cellular response to diacyl bacterial lipopeptide"/>
    <property type="evidence" value="ECO:0000250"/>
    <property type="project" value="UniProtKB"/>
</dbReference>
<dbReference type="GO" id="GO:0071223">
    <property type="term" value="P:cellular response to lipoteichoic acid"/>
    <property type="evidence" value="ECO:0007669"/>
    <property type="project" value="Ensembl"/>
</dbReference>
<dbReference type="GO" id="GO:0071727">
    <property type="term" value="P:cellular response to triacyl bacterial lipopeptide"/>
    <property type="evidence" value="ECO:0000250"/>
    <property type="project" value="UniProtKB"/>
</dbReference>
<dbReference type="GO" id="GO:0071346">
    <property type="term" value="P:cellular response to type II interferon"/>
    <property type="evidence" value="ECO:0007669"/>
    <property type="project" value="Ensembl"/>
</dbReference>
<dbReference type="GO" id="GO:0050830">
    <property type="term" value="P:defense response to Gram-positive bacterium"/>
    <property type="evidence" value="ECO:0007669"/>
    <property type="project" value="Ensembl"/>
</dbReference>
<dbReference type="GO" id="GO:0051607">
    <property type="term" value="P:defense response to virus"/>
    <property type="evidence" value="ECO:0007669"/>
    <property type="project" value="Ensembl"/>
</dbReference>
<dbReference type="GO" id="GO:0042496">
    <property type="term" value="P:detection of diacyl bacterial lipopeptide"/>
    <property type="evidence" value="ECO:0007669"/>
    <property type="project" value="Ensembl"/>
</dbReference>
<dbReference type="GO" id="GO:0042495">
    <property type="term" value="P:detection of triacyl bacterial lipopeptide"/>
    <property type="evidence" value="ECO:0007669"/>
    <property type="project" value="Ensembl"/>
</dbReference>
<dbReference type="GO" id="GO:0006954">
    <property type="term" value="P:inflammatory response"/>
    <property type="evidence" value="ECO:0000318"/>
    <property type="project" value="GO_Central"/>
</dbReference>
<dbReference type="GO" id="GO:1903974">
    <property type="term" value="P:positive regulation of cellular response to macrophage colony-stimulating factor stimulus"/>
    <property type="evidence" value="ECO:0007669"/>
    <property type="project" value="Ensembl"/>
</dbReference>
<dbReference type="GO" id="GO:0032722">
    <property type="term" value="P:positive regulation of chemokine production"/>
    <property type="evidence" value="ECO:0007669"/>
    <property type="project" value="Ensembl"/>
</dbReference>
<dbReference type="GO" id="GO:0050729">
    <property type="term" value="P:positive regulation of inflammatory response"/>
    <property type="evidence" value="ECO:0007669"/>
    <property type="project" value="Ensembl"/>
</dbReference>
<dbReference type="GO" id="GO:0032755">
    <property type="term" value="P:positive regulation of interleukin-6 production"/>
    <property type="evidence" value="ECO:0007669"/>
    <property type="project" value="Ensembl"/>
</dbReference>
<dbReference type="GO" id="GO:0032757">
    <property type="term" value="P:positive regulation of interleukin-8 production"/>
    <property type="evidence" value="ECO:0007669"/>
    <property type="project" value="Ensembl"/>
</dbReference>
<dbReference type="GO" id="GO:1904466">
    <property type="term" value="P:positive regulation of matrix metallopeptidase secretion"/>
    <property type="evidence" value="ECO:0007669"/>
    <property type="project" value="Ensembl"/>
</dbReference>
<dbReference type="GO" id="GO:1901224">
    <property type="term" value="P:positive regulation of non-canonical NF-kappaB signal transduction"/>
    <property type="evidence" value="ECO:0007669"/>
    <property type="project" value="Ensembl"/>
</dbReference>
<dbReference type="GO" id="GO:0030177">
    <property type="term" value="P:positive regulation of Wnt signaling pathway"/>
    <property type="evidence" value="ECO:0007669"/>
    <property type="project" value="Ensembl"/>
</dbReference>
<dbReference type="GO" id="GO:0034134">
    <property type="term" value="P:toll-like receptor 2 signaling pathway"/>
    <property type="evidence" value="ECO:0007669"/>
    <property type="project" value="Ensembl"/>
</dbReference>
<dbReference type="GO" id="GO:0002224">
    <property type="term" value="P:toll-like receptor signaling pathway"/>
    <property type="evidence" value="ECO:0000318"/>
    <property type="project" value="GO_Central"/>
</dbReference>
<dbReference type="GO" id="GO:0038124">
    <property type="term" value="P:toll-like receptor TLR6:TLR2 signaling pathway"/>
    <property type="evidence" value="ECO:0007669"/>
    <property type="project" value="Ensembl"/>
</dbReference>
<dbReference type="FunFam" id="3.40.50.10140:FF:000001">
    <property type="entry name" value="Toll-like receptor 2"/>
    <property type="match status" value="1"/>
</dbReference>
<dbReference type="FunFam" id="3.80.10.10:FF:000046">
    <property type="entry name" value="Toll-like receptor 2"/>
    <property type="match status" value="1"/>
</dbReference>
<dbReference type="Gene3D" id="3.80.10.10">
    <property type="entry name" value="Ribonuclease Inhibitor"/>
    <property type="match status" value="1"/>
</dbReference>
<dbReference type="Gene3D" id="3.40.50.10140">
    <property type="entry name" value="Toll/interleukin-1 receptor homology (TIR) domain"/>
    <property type="match status" value="1"/>
</dbReference>
<dbReference type="InterPro" id="IPR000483">
    <property type="entry name" value="Cys-rich_flank_reg_C"/>
</dbReference>
<dbReference type="InterPro" id="IPR001611">
    <property type="entry name" value="Leu-rich_rpt"/>
</dbReference>
<dbReference type="InterPro" id="IPR003591">
    <property type="entry name" value="Leu-rich_rpt_typical-subtyp"/>
</dbReference>
<dbReference type="InterPro" id="IPR032675">
    <property type="entry name" value="LRR_dom_sf"/>
</dbReference>
<dbReference type="InterPro" id="IPR000157">
    <property type="entry name" value="TIR_dom"/>
</dbReference>
<dbReference type="InterPro" id="IPR017241">
    <property type="entry name" value="Toll-like_receptor"/>
</dbReference>
<dbReference type="InterPro" id="IPR035897">
    <property type="entry name" value="Toll_tir_struct_dom_sf"/>
</dbReference>
<dbReference type="PANTHER" id="PTHR24365">
    <property type="entry name" value="TOLL-LIKE RECEPTOR"/>
    <property type="match status" value="1"/>
</dbReference>
<dbReference type="PANTHER" id="PTHR24365:SF17">
    <property type="entry name" value="TOLL-LIKE RECEPTOR 2"/>
    <property type="match status" value="1"/>
</dbReference>
<dbReference type="Pfam" id="PF00560">
    <property type="entry name" value="LRR_1"/>
    <property type="match status" value="1"/>
</dbReference>
<dbReference type="Pfam" id="PF13855">
    <property type="entry name" value="LRR_8"/>
    <property type="match status" value="2"/>
</dbReference>
<dbReference type="Pfam" id="PF01463">
    <property type="entry name" value="LRRCT"/>
    <property type="match status" value="1"/>
</dbReference>
<dbReference type="Pfam" id="PF01582">
    <property type="entry name" value="TIR"/>
    <property type="match status" value="1"/>
</dbReference>
<dbReference type="PIRSF" id="PIRSF037595">
    <property type="entry name" value="Toll-like_receptor"/>
    <property type="match status" value="1"/>
</dbReference>
<dbReference type="PRINTS" id="PR01537">
    <property type="entry name" value="INTRLKN1R1F"/>
</dbReference>
<dbReference type="PRINTS" id="PR00019">
    <property type="entry name" value="LEURICHRPT"/>
</dbReference>
<dbReference type="SMART" id="SM00364">
    <property type="entry name" value="LRR_BAC"/>
    <property type="match status" value="3"/>
</dbReference>
<dbReference type="SMART" id="SM00369">
    <property type="entry name" value="LRR_TYP"/>
    <property type="match status" value="7"/>
</dbReference>
<dbReference type="SMART" id="SM00082">
    <property type="entry name" value="LRRCT"/>
    <property type="match status" value="1"/>
</dbReference>
<dbReference type="SMART" id="SM00255">
    <property type="entry name" value="TIR"/>
    <property type="match status" value="1"/>
</dbReference>
<dbReference type="SUPFAM" id="SSF52058">
    <property type="entry name" value="L domain-like"/>
    <property type="match status" value="1"/>
</dbReference>
<dbReference type="SUPFAM" id="SSF52047">
    <property type="entry name" value="RNI-like"/>
    <property type="match status" value="1"/>
</dbReference>
<dbReference type="SUPFAM" id="SSF52200">
    <property type="entry name" value="Toll/Interleukin receptor TIR domain"/>
    <property type="match status" value="1"/>
</dbReference>
<dbReference type="PROSITE" id="PS51450">
    <property type="entry name" value="LRR"/>
    <property type="match status" value="11"/>
</dbReference>
<dbReference type="PROSITE" id="PS50104">
    <property type="entry name" value="TIR"/>
    <property type="match status" value="1"/>
</dbReference>
<gene>
    <name type="primary">TLR2</name>
</gene>
<organism>
    <name type="scientific">Gorilla gorilla gorilla</name>
    <name type="common">Western lowland gorilla</name>
    <dbReference type="NCBI Taxonomy" id="9595"/>
    <lineage>
        <taxon>Eukaryota</taxon>
        <taxon>Metazoa</taxon>
        <taxon>Chordata</taxon>
        <taxon>Craniata</taxon>
        <taxon>Vertebrata</taxon>
        <taxon>Euteleostomi</taxon>
        <taxon>Mammalia</taxon>
        <taxon>Eutheria</taxon>
        <taxon>Euarchontoglires</taxon>
        <taxon>Primates</taxon>
        <taxon>Haplorrhini</taxon>
        <taxon>Catarrhini</taxon>
        <taxon>Hominidae</taxon>
        <taxon>Gorilla</taxon>
    </lineage>
</organism>
<protein>
    <recommendedName>
        <fullName>Toll-like receptor 2</fullName>
    </recommendedName>
    <cdAntigenName>CD282</cdAntigenName>
</protein>
<evidence type="ECO:0000250" key="1"/>
<evidence type="ECO:0000250" key="2">
    <source>
        <dbReference type="UniProtKB" id="O00206"/>
    </source>
</evidence>
<evidence type="ECO:0000250" key="3">
    <source>
        <dbReference type="UniProtKB" id="O60603"/>
    </source>
</evidence>
<evidence type="ECO:0000250" key="4">
    <source>
        <dbReference type="UniProtKB" id="Q9QUN7"/>
    </source>
</evidence>
<evidence type="ECO:0000255" key="5"/>
<evidence type="ECO:0000255" key="6">
    <source>
        <dbReference type="PROSITE-ProRule" id="PRU00204"/>
    </source>
</evidence>
<evidence type="ECO:0000305" key="7"/>
<keyword id="KW-0968">Cytoplasmic vesicle</keyword>
<keyword id="KW-1015">Disulfide bond</keyword>
<keyword id="KW-0325">Glycoprotein</keyword>
<keyword id="KW-0391">Immunity</keyword>
<keyword id="KW-0395">Inflammatory response</keyword>
<keyword id="KW-0399">Innate immunity</keyword>
<keyword id="KW-1017">Isopeptide bond</keyword>
<keyword id="KW-0433">Leucine-rich repeat</keyword>
<keyword id="KW-0472">Membrane</keyword>
<keyword id="KW-0520">NAD</keyword>
<keyword id="KW-0675">Receptor</keyword>
<keyword id="KW-1185">Reference proteome</keyword>
<keyword id="KW-0677">Repeat</keyword>
<keyword id="KW-0732">Signal</keyword>
<keyword id="KW-0812">Transmembrane</keyword>
<keyword id="KW-1133">Transmembrane helix</keyword>
<keyword id="KW-0832">Ubl conjugation</keyword>
<name>TLR2_GORGO</name>